<accession>P0A4E0</accession>
<accession>G0K6K8</accession>
<accession>O68821</accession>
<protein>
    <recommendedName>
        <fullName>Ribonuclease HII</fullName>
        <shortName>RNase HII</shortName>
        <ecNumber>3.1.26.4</ecNumber>
    </recommendedName>
</protein>
<comment type="function">
    <text evidence="1">Endonuclease that specifically degrades the RNA of RNA-DNA hybrids.</text>
</comment>
<comment type="catalytic activity">
    <reaction>
        <text>Endonucleolytic cleavage to 5'-phosphomonoester.</text>
        <dbReference type="EC" id="3.1.26.4"/>
    </reaction>
</comment>
<comment type="cofactor">
    <cofactor evidence="1">
        <name>Mn(2+)</name>
        <dbReference type="ChEBI" id="CHEBI:29035"/>
    </cofactor>
    <cofactor evidence="1">
        <name>Mg(2+)</name>
        <dbReference type="ChEBI" id="CHEBI:18420"/>
    </cofactor>
    <text evidence="1">Manganese or magnesium. Binds 1 divalent metal ion per monomer in the absence of substrate. May bind a second metal ion after substrate binding.</text>
</comment>
<comment type="subcellular location">
    <subcellularLocation>
        <location evidence="3">Cytoplasm</location>
    </subcellularLocation>
</comment>
<comment type="similarity">
    <text evidence="3">Belongs to the RNase HII family.</text>
</comment>
<name>RNH2_BRUSU</name>
<gene>
    <name type="primary">rnhB</name>
    <name type="ordered locus">BR0386</name>
    <name type="ordered locus">BS1330_I0387</name>
</gene>
<evidence type="ECO:0000250" key="1"/>
<evidence type="ECO:0000255" key="2">
    <source>
        <dbReference type="PROSITE-ProRule" id="PRU01319"/>
    </source>
</evidence>
<evidence type="ECO:0000305" key="3"/>
<reference key="1">
    <citation type="journal article" date="2002" name="Proc. Natl. Acad. Sci. U.S.A.">
        <title>The Brucella suis genome reveals fundamental similarities between animal and plant pathogens and symbionts.</title>
        <authorList>
            <person name="Paulsen I.T."/>
            <person name="Seshadri R."/>
            <person name="Nelson K.E."/>
            <person name="Eisen J.A."/>
            <person name="Heidelberg J.F."/>
            <person name="Read T.D."/>
            <person name="Dodson R.J."/>
            <person name="Umayam L.A."/>
            <person name="Brinkac L.M."/>
            <person name="Beanan M.J."/>
            <person name="Daugherty S.C."/>
            <person name="DeBoy R.T."/>
            <person name="Durkin A.S."/>
            <person name="Kolonay J.F."/>
            <person name="Madupu R."/>
            <person name="Nelson W.C."/>
            <person name="Ayodeji B."/>
            <person name="Kraul M."/>
            <person name="Shetty J."/>
            <person name="Malek J.A."/>
            <person name="Van Aken S.E."/>
            <person name="Riedmuller S."/>
            <person name="Tettelin H."/>
            <person name="Gill S.R."/>
            <person name="White O."/>
            <person name="Salzberg S.L."/>
            <person name="Hoover D.L."/>
            <person name="Lindler L.E."/>
            <person name="Halling S.M."/>
            <person name="Boyle S.M."/>
            <person name="Fraser C.M."/>
        </authorList>
    </citation>
    <scope>NUCLEOTIDE SEQUENCE [LARGE SCALE GENOMIC DNA]</scope>
    <source>
        <strain>1330</strain>
    </source>
</reference>
<reference key="2">
    <citation type="journal article" date="2011" name="J. Bacteriol.">
        <title>Revised genome sequence of Brucella suis 1330.</title>
        <authorList>
            <person name="Tae H."/>
            <person name="Shallom S."/>
            <person name="Settlage R."/>
            <person name="Preston D."/>
            <person name="Adams L.G."/>
            <person name="Garner H.R."/>
        </authorList>
    </citation>
    <scope>NUCLEOTIDE SEQUENCE [LARGE SCALE GENOMIC DNA]</scope>
    <source>
        <strain>1330</strain>
    </source>
</reference>
<dbReference type="EC" id="3.1.26.4"/>
<dbReference type="EMBL" id="AE014291">
    <property type="protein sequence ID" value="AAN29332.1"/>
    <property type="molecule type" value="Genomic_DNA"/>
</dbReference>
<dbReference type="EMBL" id="CP002997">
    <property type="protein sequence ID" value="AEM17745.1"/>
    <property type="molecule type" value="Genomic_DNA"/>
</dbReference>
<dbReference type="RefSeq" id="WP_004683016.1">
    <property type="nucleotide sequence ID" value="NZ_KN046804.1"/>
</dbReference>
<dbReference type="SMR" id="P0A4E0"/>
<dbReference type="KEGG" id="bms:BR0386"/>
<dbReference type="KEGG" id="bsi:BS1330_I0387"/>
<dbReference type="HOGENOM" id="CLU_036532_3_2_5"/>
<dbReference type="PhylomeDB" id="P0A4E0"/>
<dbReference type="Proteomes" id="UP000007104">
    <property type="component" value="Chromosome I"/>
</dbReference>
<dbReference type="GO" id="GO:0005737">
    <property type="term" value="C:cytoplasm"/>
    <property type="evidence" value="ECO:0007669"/>
    <property type="project" value="UniProtKB-SubCell"/>
</dbReference>
<dbReference type="GO" id="GO:0032299">
    <property type="term" value="C:ribonuclease H2 complex"/>
    <property type="evidence" value="ECO:0007669"/>
    <property type="project" value="TreeGrafter"/>
</dbReference>
<dbReference type="GO" id="GO:0030145">
    <property type="term" value="F:manganese ion binding"/>
    <property type="evidence" value="ECO:0007669"/>
    <property type="project" value="UniProtKB-UniRule"/>
</dbReference>
<dbReference type="GO" id="GO:0003723">
    <property type="term" value="F:RNA binding"/>
    <property type="evidence" value="ECO:0007669"/>
    <property type="project" value="InterPro"/>
</dbReference>
<dbReference type="GO" id="GO:0004523">
    <property type="term" value="F:RNA-DNA hybrid ribonuclease activity"/>
    <property type="evidence" value="ECO:0007669"/>
    <property type="project" value="UniProtKB-UniRule"/>
</dbReference>
<dbReference type="GO" id="GO:0043137">
    <property type="term" value="P:DNA replication, removal of RNA primer"/>
    <property type="evidence" value="ECO:0007669"/>
    <property type="project" value="TreeGrafter"/>
</dbReference>
<dbReference type="GO" id="GO:0006298">
    <property type="term" value="P:mismatch repair"/>
    <property type="evidence" value="ECO:0007669"/>
    <property type="project" value="TreeGrafter"/>
</dbReference>
<dbReference type="CDD" id="cd07182">
    <property type="entry name" value="RNase_HII_bacteria_HII_like"/>
    <property type="match status" value="1"/>
</dbReference>
<dbReference type="Gene3D" id="3.30.420.10">
    <property type="entry name" value="Ribonuclease H-like superfamily/Ribonuclease H"/>
    <property type="match status" value="1"/>
</dbReference>
<dbReference type="HAMAP" id="MF_00052_B">
    <property type="entry name" value="RNase_HII_B"/>
    <property type="match status" value="1"/>
</dbReference>
<dbReference type="InterPro" id="IPR022898">
    <property type="entry name" value="RNase_HII"/>
</dbReference>
<dbReference type="InterPro" id="IPR001352">
    <property type="entry name" value="RNase_HII/HIII"/>
</dbReference>
<dbReference type="InterPro" id="IPR024567">
    <property type="entry name" value="RNase_HII/HIII_dom"/>
</dbReference>
<dbReference type="InterPro" id="IPR012337">
    <property type="entry name" value="RNaseH-like_sf"/>
</dbReference>
<dbReference type="InterPro" id="IPR036397">
    <property type="entry name" value="RNaseH_sf"/>
</dbReference>
<dbReference type="NCBIfam" id="NF000595">
    <property type="entry name" value="PRK00015.1-3"/>
    <property type="match status" value="1"/>
</dbReference>
<dbReference type="PANTHER" id="PTHR10954">
    <property type="entry name" value="RIBONUCLEASE H2 SUBUNIT A"/>
    <property type="match status" value="1"/>
</dbReference>
<dbReference type="PANTHER" id="PTHR10954:SF18">
    <property type="entry name" value="RIBONUCLEASE HII"/>
    <property type="match status" value="1"/>
</dbReference>
<dbReference type="Pfam" id="PF01351">
    <property type="entry name" value="RNase_HII"/>
    <property type="match status" value="1"/>
</dbReference>
<dbReference type="SUPFAM" id="SSF53098">
    <property type="entry name" value="Ribonuclease H-like"/>
    <property type="match status" value="1"/>
</dbReference>
<dbReference type="PROSITE" id="PS51975">
    <property type="entry name" value="RNASE_H_2"/>
    <property type="match status" value="1"/>
</dbReference>
<keyword id="KW-0963">Cytoplasm</keyword>
<keyword id="KW-0255">Endonuclease</keyword>
<keyword id="KW-0378">Hydrolase</keyword>
<keyword id="KW-0464">Manganese</keyword>
<keyword id="KW-0479">Metal-binding</keyword>
<keyword id="KW-0540">Nuclease</keyword>
<feature type="chain" id="PRO_0000111552" description="Ribonuclease HII">
    <location>
        <begin position="1"/>
        <end position="220"/>
    </location>
</feature>
<feature type="domain" description="RNase H type-2" evidence="2">
    <location>
        <begin position="32"/>
        <end position="220"/>
    </location>
</feature>
<feature type="binding site" evidence="1">
    <location>
        <position position="38"/>
    </location>
    <ligand>
        <name>a divalent metal cation</name>
        <dbReference type="ChEBI" id="CHEBI:60240"/>
    </ligand>
</feature>
<feature type="binding site" evidence="1">
    <location>
        <position position="39"/>
    </location>
    <ligand>
        <name>a divalent metal cation</name>
        <dbReference type="ChEBI" id="CHEBI:60240"/>
    </ligand>
</feature>
<feature type="binding site" evidence="1">
    <location>
        <position position="130"/>
    </location>
    <ligand>
        <name>a divalent metal cation</name>
        <dbReference type="ChEBI" id="CHEBI:60240"/>
    </ligand>
</feature>
<organism>
    <name type="scientific">Brucella suis biovar 1 (strain 1330)</name>
    <dbReference type="NCBI Taxonomy" id="204722"/>
    <lineage>
        <taxon>Bacteria</taxon>
        <taxon>Pseudomonadati</taxon>
        <taxon>Pseudomonadota</taxon>
        <taxon>Alphaproteobacteria</taxon>
        <taxon>Hyphomicrobiales</taxon>
        <taxon>Brucellaceae</taxon>
        <taxon>Brucella/Ochrobactrum group</taxon>
        <taxon>Brucella</taxon>
    </lineage>
</organism>
<sequence>MKRSASDSPLLFDLPLAPDFSQEQQLMKRGLKHIAGIDEAGRGPLAGPVVAAAVVLDQNDLPEGLDDSKRLTAARREALYEIILTKAITVSVASLSARSIDASDIRKAALEAMRRAVIGLTLKPCHALVDGRDVPPGLPCPGSALVKGDQRSVSIAAASIVAKVTRDRMMIRAGAAHPPYGLEIHAGYATQKHRAAIESEGPVPGLHRYTFAPIKGRFDC</sequence>
<proteinExistence type="inferred from homology"/>